<comment type="function">
    <text evidence="2">S-adenosyl-L-methionine-dependent guanine N(1)-methyltransferase that catalyzes the formation of N(1)-methylguanine at position 9 (m1G9) in cytoplasmic tRNA.</text>
</comment>
<comment type="catalytic activity">
    <reaction evidence="2">
        <text>guanosine(9) in tRNA + S-adenosyl-L-methionine = N(1)-methylguanosine(9) in tRNA + S-adenosyl-L-homocysteine + H(+)</text>
        <dbReference type="Rhea" id="RHEA:43156"/>
        <dbReference type="Rhea" id="RHEA-COMP:10367"/>
        <dbReference type="Rhea" id="RHEA-COMP:10368"/>
        <dbReference type="ChEBI" id="CHEBI:15378"/>
        <dbReference type="ChEBI" id="CHEBI:57856"/>
        <dbReference type="ChEBI" id="CHEBI:59789"/>
        <dbReference type="ChEBI" id="CHEBI:73542"/>
        <dbReference type="ChEBI" id="CHEBI:74269"/>
        <dbReference type="EC" id="2.1.1.221"/>
    </reaction>
</comment>
<comment type="subunit">
    <text evidence="1">Monomer.</text>
</comment>
<comment type="subcellular location">
    <subcellularLocation>
        <location evidence="2">Cytoplasm</location>
    </subcellularLocation>
    <subcellularLocation>
        <location evidence="2">Nucleus</location>
    </subcellularLocation>
</comment>
<comment type="similarity">
    <text evidence="3">Belongs to the class IV-like SAM-binding methyltransferase superfamily. TRM10 family.</text>
</comment>
<organism>
    <name type="scientific">Candida glabrata (strain ATCC 2001 / BCRC 20586 / JCM 3761 / NBRC 0622 / NRRL Y-65 / CBS 138)</name>
    <name type="common">Yeast</name>
    <name type="synonym">Nakaseomyces glabratus</name>
    <dbReference type="NCBI Taxonomy" id="284593"/>
    <lineage>
        <taxon>Eukaryota</taxon>
        <taxon>Fungi</taxon>
        <taxon>Dikarya</taxon>
        <taxon>Ascomycota</taxon>
        <taxon>Saccharomycotina</taxon>
        <taxon>Saccharomycetes</taxon>
        <taxon>Saccharomycetales</taxon>
        <taxon>Saccharomycetaceae</taxon>
        <taxon>Nakaseomyces</taxon>
    </lineage>
</organism>
<sequence length="287" mass="33876">MSDTSDLVDGKWQRLPPVPEGMSKSQWKKQWRRQMYEAKKEEYAEVRKEKRKRAKENRRKKIQEYIDRGEEVPAELKREPRVNRDQVASGINIILDCAFDDLMNDKEIVSTSNQITRAYSANRRASQYANITVTSFNKRLKERFDKALDDCNYPQWQNFKFVSDEKLITEGDKSKMVYLTADTEEQLDTLEPGMTYIVGGIVDKNRHKLLCYNKAKELGIPTRRLPIGEYIKIEGRKVLTTTHVIQLMLKYCESRDWKESFESVIPSRKLDPVKEKEQQQQQQQQQQ</sequence>
<reference key="1">
    <citation type="journal article" date="2004" name="Nature">
        <title>Genome evolution in yeasts.</title>
        <authorList>
            <person name="Dujon B."/>
            <person name="Sherman D."/>
            <person name="Fischer G."/>
            <person name="Durrens P."/>
            <person name="Casaregola S."/>
            <person name="Lafontaine I."/>
            <person name="de Montigny J."/>
            <person name="Marck C."/>
            <person name="Neuveglise C."/>
            <person name="Talla E."/>
            <person name="Goffard N."/>
            <person name="Frangeul L."/>
            <person name="Aigle M."/>
            <person name="Anthouard V."/>
            <person name="Babour A."/>
            <person name="Barbe V."/>
            <person name="Barnay S."/>
            <person name="Blanchin S."/>
            <person name="Beckerich J.-M."/>
            <person name="Beyne E."/>
            <person name="Bleykasten C."/>
            <person name="Boisrame A."/>
            <person name="Boyer J."/>
            <person name="Cattolico L."/>
            <person name="Confanioleri F."/>
            <person name="de Daruvar A."/>
            <person name="Despons L."/>
            <person name="Fabre E."/>
            <person name="Fairhead C."/>
            <person name="Ferry-Dumazet H."/>
            <person name="Groppi A."/>
            <person name="Hantraye F."/>
            <person name="Hennequin C."/>
            <person name="Jauniaux N."/>
            <person name="Joyet P."/>
            <person name="Kachouri R."/>
            <person name="Kerrest A."/>
            <person name="Koszul R."/>
            <person name="Lemaire M."/>
            <person name="Lesur I."/>
            <person name="Ma L."/>
            <person name="Muller H."/>
            <person name="Nicaud J.-M."/>
            <person name="Nikolski M."/>
            <person name="Oztas S."/>
            <person name="Ozier-Kalogeropoulos O."/>
            <person name="Pellenz S."/>
            <person name="Potier S."/>
            <person name="Richard G.-F."/>
            <person name="Straub M.-L."/>
            <person name="Suleau A."/>
            <person name="Swennen D."/>
            <person name="Tekaia F."/>
            <person name="Wesolowski-Louvel M."/>
            <person name="Westhof E."/>
            <person name="Wirth B."/>
            <person name="Zeniou-Meyer M."/>
            <person name="Zivanovic Y."/>
            <person name="Bolotin-Fukuhara M."/>
            <person name="Thierry A."/>
            <person name="Bouchier C."/>
            <person name="Caudron B."/>
            <person name="Scarpelli C."/>
            <person name="Gaillardin C."/>
            <person name="Weissenbach J."/>
            <person name="Wincker P."/>
            <person name="Souciet J.-L."/>
        </authorList>
    </citation>
    <scope>NUCLEOTIDE SEQUENCE [LARGE SCALE GENOMIC DNA]</scope>
    <source>
        <strain>ATCC 2001 / BCRC 20586 / JCM 3761 / NBRC 0622 / NRRL Y-65 / CBS 138</strain>
    </source>
</reference>
<protein>
    <recommendedName>
        <fullName evidence="2">tRNA (guanine(9)-N1)-methyltransferase</fullName>
        <ecNumber evidence="2">2.1.1.221</ecNumber>
    </recommendedName>
    <alternativeName>
        <fullName evidence="2">tRNA methyltransferase 10</fullName>
    </alternativeName>
    <alternativeName>
        <fullName evidence="2">tRNA(m1G9)-methyltransferase</fullName>
        <shortName evidence="2">tRNA(m1G9)MTase</shortName>
    </alternativeName>
</protein>
<accession>Q6FQB2</accession>
<proteinExistence type="inferred from homology"/>
<feature type="chain" id="PRO_0000060512" description="tRNA (guanine(9)-N1)-methyltransferase">
    <location>
        <begin position="1"/>
        <end position="287"/>
    </location>
</feature>
<feature type="domain" description="SAM-dependent MTase TRM10-type" evidence="3">
    <location>
        <begin position="79"/>
        <end position="272"/>
    </location>
</feature>
<feature type="region of interest" description="Disordered" evidence="4">
    <location>
        <begin position="1"/>
        <end position="27"/>
    </location>
</feature>
<feature type="region of interest" description="Disordered" evidence="4">
    <location>
        <begin position="268"/>
        <end position="287"/>
    </location>
</feature>
<feature type="compositionally biased region" description="Basic and acidic residues" evidence="4">
    <location>
        <begin position="268"/>
        <end position="278"/>
    </location>
</feature>
<feature type="active site" description="Proton acceptor" evidence="1">
    <location>
        <position position="203"/>
    </location>
</feature>
<feature type="binding site" evidence="2">
    <location>
        <begin position="179"/>
        <end position="180"/>
    </location>
    <ligand>
        <name>S-adenosyl-L-methionine</name>
        <dbReference type="ChEBI" id="CHEBI:59789"/>
    </ligand>
</feature>
<feature type="binding site" evidence="2">
    <location>
        <position position="199"/>
    </location>
    <ligand>
        <name>S-adenosyl-L-methionine</name>
        <dbReference type="ChEBI" id="CHEBI:59789"/>
    </ligand>
</feature>
<feature type="binding site" evidence="2">
    <location>
        <begin position="203"/>
        <end position="207"/>
    </location>
    <ligand>
        <name>S-adenosyl-L-methionine</name>
        <dbReference type="ChEBI" id="CHEBI:59789"/>
    </ligand>
</feature>
<feature type="binding site" evidence="2">
    <location>
        <position position="211"/>
    </location>
    <ligand>
        <name>S-adenosyl-L-methionine</name>
        <dbReference type="ChEBI" id="CHEBI:59789"/>
    </ligand>
</feature>
<feature type="binding site" evidence="2">
    <location>
        <position position="225"/>
    </location>
    <ligand>
        <name>S-adenosyl-L-methionine</name>
        <dbReference type="ChEBI" id="CHEBI:59789"/>
    </ligand>
</feature>
<feature type="binding site" evidence="2">
    <location>
        <begin position="237"/>
        <end position="239"/>
    </location>
    <ligand>
        <name>S-adenosyl-L-methionine</name>
        <dbReference type="ChEBI" id="CHEBI:59789"/>
    </ligand>
</feature>
<dbReference type="EC" id="2.1.1.221" evidence="2"/>
<dbReference type="EMBL" id="CR380955">
    <property type="protein sequence ID" value="CAG60519.1"/>
    <property type="molecule type" value="Genomic_DNA"/>
</dbReference>
<dbReference type="RefSeq" id="XP_447582.1">
    <property type="nucleotide sequence ID" value="XM_447582.1"/>
</dbReference>
<dbReference type="SMR" id="Q6FQB2"/>
<dbReference type="FunCoup" id="Q6FQB2">
    <property type="interactions" value="819"/>
</dbReference>
<dbReference type="STRING" id="284593.Q6FQB2"/>
<dbReference type="EnsemblFungi" id="CAGL0I07667g-T">
    <property type="protein sequence ID" value="CAGL0I07667g-T-p1"/>
    <property type="gene ID" value="CAGL0I07667g"/>
</dbReference>
<dbReference type="KEGG" id="cgr:2889002"/>
<dbReference type="CGD" id="CAL0132340">
    <property type="gene designation" value="CAGL0I07667g"/>
</dbReference>
<dbReference type="VEuPathDB" id="FungiDB:B1J91_I07667g"/>
<dbReference type="VEuPathDB" id="FungiDB:CAGL0I07667g"/>
<dbReference type="eggNOG" id="KOG2967">
    <property type="taxonomic scope" value="Eukaryota"/>
</dbReference>
<dbReference type="HOGENOM" id="CLU_034384_1_0_1"/>
<dbReference type="InParanoid" id="Q6FQB2"/>
<dbReference type="OMA" id="FKKNDGW"/>
<dbReference type="Proteomes" id="UP000002428">
    <property type="component" value="Chromosome I"/>
</dbReference>
<dbReference type="GO" id="GO:0005737">
    <property type="term" value="C:cytoplasm"/>
    <property type="evidence" value="ECO:0007669"/>
    <property type="project" value="UniProtKB-SubCell"/>
</dbReference>
<dbReference type="GO" id="GO:0005634">
    <property type="term" value="C:nucleus"/>
    <property type="evidence" value="ECO:0007669"/>
    <property type="project" value="UniProtKB-SubCell"/>
</dbReference>
<dbReference type="GO" id="GO:0052905">
    <property type="term" value="F:tRNA (guanosine(9)-N1)-methyltransferase activity"/>
    <property type="evidence" value="ECO:0007669"/>
    <property type="project" value="UniProtKB-EC"/>
</dbReference>
<dbReference type="GO" id="GO:0000049">
    <property type="term" value="F:tRNA binding"/>
    <property type="evidence" value="ECO:0007669"/>
    <property type="project" value="TreeGrafter"/>
</dbReference>
<dbReference type="GO" id="GO:0002939">
    <property type="term" value="P:tRNA N1-guanine methylation"/>
    <property type="evidence" value="ECO:0007669"/>
    <property type="project" value="EnsemblFungi"/>
</dbReference>
<dbReference type="CDD" id="cd18089">
    <property type="entry name" value="SPOUT_Trm10-like"/>
    <property type="match status" value="1"/>
</dbReference>
<dbReference type="Gene3D" id="3.40.1280.30">
    <property type="match status" value="1"/>
</dbReference>
<dbReference type="InterPro" id="IPR028564">
    <property type="entry name" value="MT_TRM10-typ"/>
</dbReference>
<dbReference type="InterPro" id="IPR038459">
    <property type="entry name" value="MT_TRM10-typ_sf"/>
</dbReference>
<dbReference type="InterPro" id="IPR016653">
    <property type="entry name" value="TRM10/TRM10A"/>
</dbReference>
<dbReference type="InterPro" id="IPR007356">
    <property type="entry name" value="tRNA_m1G_MeTrfase_euk"/>
</dbReference>
<dbReference type="InterPro" id="IPR016009">
    <property type="entry name" value="tRNA_MeTrfase_TRMD/TRM10"/>
</dbReference>
<dbReference type="PANTHER" id="PTHR13563">
    <property type="entry name" value="TRNA (GUANINE-9-) METHYLTRANSFERASE"/>
    <property type="match status" value="1"/>
</dbReference>
<dbReference type="PANTHER" id="PTHR13563:SF13">
    <property type="entry name" value="TRNA METHYLTRANSFERASE 10 HOMOLOG A"/>
    <property type="match status" value="1"/>
</dbReference>
<dbReference type="Pfam" id="PF01746">
    <property type="entry name" value="tRNA_m1G_MT"/>
    <property type="match status" value="1"/>
</dbReference>
<dbReference type="PIRSF" id="PIRSF016323">
    <property type="entry name" value="tRNA_m1G_mtfrase_met"/>
    <property type="match status" value="1"/>
</dbReference>
<dbReference type="PROSITE" id="PS51675">
    <property type="entry name" value="SAM_MT_TRM10"/>
    <property type="match status" value="1"/>
</dbReference>
<name>TRM10_CANGA</name>
<keyword id="KW-0963">Cytoplasm</keyword>
<keyword id="KW-0489">Methyltransferase</keyword>
<keyword id="KW-0539">Nucleus</keyword>
<keyword id="KW-1185">Reference proteome</keyword>
<keyword id="KW-0949">S-adenosyl-L-methionine</keyword>
<keyword id="KW-0808">Transferase</keyword>
<keyword id="KW-0819">tRNA processing</keyword>
<gene>
    <name evidence="2" type="primary">TRM10</name>
    <name type="ordered locus">CAGL0I07667g</name>
</gene>
<evidence type="ECO:0000250" key="1">
    <source>
        <dbReference type="UniProtKB" id="O14214"/>
    </source>
</evidence>
<evidence type="ECO:0000250" key="2">
    <source>
        <dbReference type="UniProtKB" id="Q12400"/>
    </source>
</evidence>
<evidence type="ECO:0000255" key="3">
    <source>
        <dbReference type="PROSITE-ProRule" id="PRU01012"/>
    </source>
</evidence>
<evidence type="ECO:0000256" key="4">
    <source>
        <dbReference type="SAM" id="MobiDB-lite"/>
    </source>
</evidence>